<accession>Q667W0</accession>
<feature type="signal peptide" evidence="1">
    <location>
        <begin position="1"/>
        <end position="21"/>
    </location>
</feature>
<feature type="chain" id="PRO_0000354003" description="Membrane-bound lytic murein transglycosylase F">
    <location>
        <begin position="22"/>
        <end position="486"/>
    </location>
</feature>
<feature type="region of interest" description="Non-LT domain" evidence="1">
    <location>
        <begin position="22"/>
        <end position="268"/>
    </location>
</feature>
<feature type="region of interest" description="LT domain" evidence="1">
    <location>
        <begin position="269"/>
        <end position="486"/>
    </location>
</feature>
<feature type="active site" evidence="1">
    <location>
        <position position="313"/>
    </location>
</feature>
<protein>
    <recommendedName>
        <fullName evidence="1">Membrane-bound lytic murein transglycosylase F</fullName>
        <ecNumber evidence="1">4.2.2.n1</ecNumber>
    </recommendedName>
    <alternativeName>
        <fullName evidence="1">Murein lyase F</fullName>
    </alternativeName>
</protein>
<reference key="1">
    <citation type="journal article" date="2004" name="Proc. Natl. Acad. Sci. U.S.A.">
        <title>Insights into the evolution of Yersinia pestis through whole-genome comparison with Yersinia pseudotuberculosis.</title>
        <authorList>
            <person name="Chain P.S.G."/>
            <person name="Carniel E."/>
            <person name="Larimer F.W."/>
            <person name="Lamerdin J."/>
            <person name="Stoutland P.O."/>
            <person name="Regala W.M."/>
            <person name="Georgescu A.M."/>
            <person name="Vergez L.M."/>
            <person name="Land M.L."/>
            <person name="Motin V.L."/>
            <person name="Brubaker R.R."/>
            <person name="Fowler J."/>
            <person name="Hinnebusch J."/>
            <person name="Marceau M."/>
            <person name="Medigue C."/>
            <person name="Simonet M."/>
            <person name="Chenal-Francisque V."/>
            <person name="Souza B."/>
            <person name="Dacheux D."/>
            <person name="Elliott J.M."/>
            <person name="Derbise A."/>
            <person name="Hauser L.J."/>
            <person name="Garcia E."/>
        </authorList>
    </citation>
    <scope>NUCLEOTIDE SEQUENCE [LARGE SCALE GENOMIC DNA]</scope>
    <source>
        <strain>IP32953</strain>
    </source>
</reference>
<sequence>MTRIKLSYFTIGLVALLLALALWPNIPWRNGQEGQLDQIKARGELRVSTISSPLIYSTEKDTPSGFDYELAKRFADYLGVKLVIIPHHNIDDLFDALDNDDTDLLAAGLIYNRERLNRARTGPAYYSVSQQLVYRLGSPRPKSFSDLKGQVVVASGSAHMTTLKRLKQTKYPELNWSSSVDKSGKELLEQVAEGKLDYTLGDSATIALLQRIHPQLAVAFDVTDEEPVTWYFKQSDDDSLYAAMLDFYSEMVEDGSLARLEEKYLGHVGSFDYVDTKTFLSAIDNVLPSYQHLFEKHAGDIDWKLLAVIAYQESHWNPQATSPTGVRGLMMLTRVTADGLGVKDRVDPEESIRGGAIYLQRLMKKLPETIPEDERIWFALAAYNLGYGHMLDARRLTKNQNGNPDSWVDVKMRLPMLSQKRYYPSTTYGYARGHEAYNYVENIRRYQVSLVGYLQEKEKKAAQHAAIEAELGKSNPVVGPGWSIGD</sequence>
<gene>
    <name evidence="1" type="primary">mltF</name>
    <name type="ordered locus">YPTB2880</name>
</gene>
<organism>
    <name type="scientific">Yersinia pseudotuberculosis serotype I (strain IP32953)</name>
    <dbReference type="NCBI Taxonomy" id="273123"/>
    <lineage>
        <taxon>Bacteria</taxon>
        <taxon>Pseudomonadati</taxon>
        <taxon>Pseudomonadota</taxon>
        <taxon>Gammaproteobacteria</taxon>
        <taxon>Enterobacterales</taxon>
        <taxon>Yersiniaceae</taxon>
        <taxon>Yersinia</taxon>
    </lineage>
</organism>
<evidence type="ECO:0000255" key="1">
    <source>
        <dbReference type="HAMAP-Rule" id="MF_02016"/>
    </source>
</evidence>
<evidence type="ECO:0000305" key="2"/>
<proteinExistence type="inferred from homology"/>
<dbReference type="EC" id="4.2.2.n1" evidence="1"/>
<dbReference type="EMBL" id="BX936398">
    <property type="protein sequence ID" value="CAH22118.1"/>
    <property type="status" value="ALT_INIT"/>
    <property type="molecule type" value="Genomic_DNA"/>
</dbReference>
<dbReference type="RefSeq" id="WP_024062994.1">
    <property type="nucleotide sequence ID" value="NC_006155.1"/>
</dbReference>
<dbReference type="SMR" id="Q667W0"/>
<dbReference type="CAZy" id="GH23">
    <property type="family name" value="Glycoside Hydrolase Family 23"/>
</dbReference>
<dbReference type="GeneID" id="49785110"/>
<dbReference type="KEGG" id="ypo:BZ17_3751"/>
<dbReference type="KEGG" id="yps:YPTB2880"/>
<dbReference type="PATRIC" id="fig|273123.14.peg.3933"/>
<dbReference type="Proteomes" id="UP000001011">
    <property type="component" value="Chromosome"/>
</dbReference>
<dbReference type="GO" id="GO:0009279">
    <property type="term" value="C:cell outer membrane"/>
    <property type="evidence" value="ECO:0007669"/>
    <property type="project" value="UniProtKB-SubCell"/>
</dbReference>
<dbReference type="GO" id="GO:0008933">
    <property type="term" value="F:peptidoglycan lytic transglycosylase activity"/>
    <property type="evidence" value="ECO:0007669"/>
    <property type="project" value="UniProtKB-UniRule"/>
</dbReference>
<dbReference type="GO" id="GO:0016998">
    <property type="term" value="P:cell wall macromolecule catabolic process"/>
    <property type="evidence" value="ECO:0007669"/>
    <property type="project" value="UniProtKB-UniRule"/>
</dbReference>
<dbReference type="GO" id="GO:0071555">
    <property type="term" value="P:cell wall organization"/>
    <property type="evidence" value="ECO:0007669"/>
    <property type="project" value="UniProtKB-KW"/>
</dbReference>
<dbReference type="GO" id="GO:0009253">
    <property type="term" value="P:peptidoglycan catabolic process"/>
    <property type="evidence" value="ECO:0007669"/>
    <property type="project" value="TreeGrafter"/>
</dbReference>
<dbReference type="CDD" id="cd13403">
    <property type="entry name" value="MLTF-like"/>
    <property type="match status" value="1"/>
</dbReference>
<dbReference type="CDD" id="cd01009">
    <property type="entry name" value="PBP2_YfhD_N"/>
    <property type="match status" value="1"/>
</dbReference>
<dbReference type="FunFam" id="1.10.530.10:FF:000003">
    <property type="entry name" value="Membrane-bound lytic murein transglycosylase F"/>
    <property type="match status" value="1"/>
</dbReference>
<dbReference type="Gene3D" id="1.10.530.10">
    <property type="match status" value="1"/>
</dbReference>
<dbReference type="Gene3D" id="3.40.190.10">
    <property type="entry name" value="Periplasmic binding protein-like II"/>
    <property type="match status" value="2"/>
</dbReference>
<dbReference type="HAMAP" id="MF_02016">
    <property type="entry name" value="MltF"/>
    <property type="match status" value="1"/>
</dbReference>
<dbReference type="InterPro" id="IPR023346">
    <property type="entry name" value="Lysozyme-like_dom_sf"/>
</dbReference>
<dbReference type="InterPro" id="IPR023703">
    <property type="entry name" value="MltF"/>
</dbReference>
<dbReference type="InterPro" id="IPR001638">
    <property type="entry name" value="Solute-binding_3/MltF_N"/>
</dbReference>
<dbReference type="InterPro" id="IPR000189">
    <property type="entry name" value="Transglyc_AS"/>
</dbReference>
<dbReference type="InterPro" id="IPR008258">
    <property type="entry name" value="Transglycosylase_SLT_dom_1"/>
</dbReference>
<dbReference type="NCBIfam" id="NF008112">
    <property type="entry name" value="PRK10859.1"/>
    <property type="match status" value="1"/>
</dbReference>
<dbReference type="PANTHER" id="PTHR35936">
    <property type="entry name" value="MEMBRANE-BOUND LYTIC MUREIN TRANSGLYCOSYLASE F"/>
    <property type="match status" value="1"/>
</dbReference>
<dbReference type="PANTHER" id="PTHR35936:SF32">
    <property type="entry name" value="MEMBRANE-BOUND LYTIC MUREIN TRANSGLYCOSYLASE F"/>
    <property type="match status" value="1"/>
</dbReference>
<dbReference type="Pfam" id="PF00497">
    <property type="entry name" value="SBP_bac_3"/>
    <property type="match status" value="1"/>
</dbReference>
<dbReference type="Pfam" id="PF01464">
    <property type="entry name" value="SLT"/>
    <property type="match status" value="1"/>
</dbReference>
<dbReference type="SMART" id="SM00062">
    <property type="entry name" value="PBPb"/>
    <property type="match status" value="1"/>
</dbReference>
<dbReference type="SUPFAM" id="SSF53955">
    <property type="entry name" value="Lysozyme-like"/>
    <property type="match status" value="1"/>
</dbReference>
<dbReference type="SUPFAM" id="SSF53850">
    <property type="entry name" value="Periplasmic binding protein-like II"/>
    <property type="match status" value="1"/>
</dbReference>
<dbReference type="PROSITE" id="PS00922">
    <property type="entry name" value="TRANSGLYCOSYLASE"/>
    <property type="match status" value="1"/>
</dbReference>
<comment type="function">
    <text evidence="1">Murein-degrading enzyme that degrades murein glycan strands and insoluble, high-molecular weight murein sacculi, with the concomitant formation of a 1,6-anhydromuramoyl product. Lytic transglycosylases (LTs) play an integral role in the metabolism of the peptidoglycan (PG) sacculus. Their lytic action creates space within the PG sacculus to allow for its expansion as well as for the insertion of various structures such as secretion systems and flagella.</text>
</comment>
<comment type="catalytic activity">
    <reaction evidence="1">
        <text>Exolytic cleavage of the (1-&gt;4)-beta-glycosidic linkage between N-acetylmuramic acid (MurNAc) and N-acetylglucosamine (GlcNAc) residues in peptidoglycan, from either the reducing or the non-reducing ends of the peptidoglycan chains, with concomitant formation of a 1,6-anhydrobond in the MurNAc residue.</text>
        <dbReference type="EC" id="4.2.2.n1"/>
    </reaction>
</comment>
<comment type="subcellular location">
    <subcellularLocation>
        <location>Cell outer membrane</location>
        <topology>Peripheral membrane protein</topology>
    </subcellularLocation>
    <text evidence="1">Attached to the inner leaflet of the outer membrane.</text>
</comment>
<comment type="domain">
    <text evidence="1">The N-terminal domain does not have lytic activity and probably modulates enzymatic activity. The C-terminal domain is the catalytic active domain.</text>
</comment>
<comment type="similarity">
    <text evidence="1">In the N-terminal section; belongs to the bacterial solute-binding protein 3 family.</text>
</comment>
<comment type="similarity">
    <text evidence="1">In the C-terminal section; belongs to the transglycosylase Slt family.</text>
</comment>
<comment type="sequence caution" evidence="2">
    <conflict type="erroneous initiation">
        <sequence resource="EMBL-CDS" id="CAH22118"/>
    </conflict>
</comment>
<name>MLTF_YERPS</name>
<keyword id="KW-0998">Cell outer membrane</keyword>
<keyword id="KW-0961">Cell wall biogenesis/degradation</keyword>
<keyword id="KW-0456">Lyase</keyword>
<keyword id="KW-0472">Membrane</keyword>
<keyword id="KW-0732">Signal</keyword>